<organism>
    <name type="scientific">Mus musculus</name>
    <name type="common">Mouse</name>
    <dbReference type="NCBI Taxonomy" id="10090"/>
    <lineage>
        <taxon>Eukaryota</taxon>
        <taxon>Metazoa</taxon>
        <taxon>Chordata</taxon>
        <taxon>Craniata</taxon>
        <taxon>Vertebrata</taxon>
        <taxon>Euteleostomi</taxon>
        <taxon>Mammalia</taxon>
        <taxon>Eutheria</taxon>
        <taxon>Euarchontoglires</taxon>
        <taxon>Glires</taxon>
        <taxon>Rodentia</taxon>
        <taxon>Myomorpha</taxon>
        <taxon>Muroidea</taxon>
        <taxon>Muridae</taxon>
        <taxon>Murinae</taxon>
        <taxon>Mus</taxon>
        <taxon>Mus</taxon>
    </lineage>
</organism>
<dbReference type="EMBL" id="AB028856">
    <property type="protein sequence ID" value="BAA88304.1"/>
    <property type="molecule type" value="mRNA"/>
</dbReference>
<dbReference type="EMBL" id="AK006026">
    <property type="protein sequence ID" value="BAB24372.1"/>
    <property type="molecule type" value="mRNA"/>
</dbReference>
<dbReference type="EMBL" id="BC049591">
    <property type="protein sequence ID" value="AAH49591.1"/>
    <property type="molecule type" value="mRNA"/>
</dbReference>
<dbReference type="EMBL" id="BC061112">
    <property type="protein sequence ID" value="AAH61112.1"/>
    <property type="molecule type" value="mRNA"/>
</dbReference>
<dbReference type="CCDS" id="CCDS20334.1"/>
<dbReference type="RefSeq" id="NP_064348.1">
    <property type="nucleotide sequence ID" value="NM_019964.1"/>
</dbReference>
<dbReference type="SMR" id="Q9QYI7"/>
<dbReference type="FunCoup" id="Q9QYI7">
    <property type="interactions" value="944"/>
</dbReference>
<dbReference type="IntAct" id="Q9QYI7">
    <property type="interactions" value="1"/>
</dbReference>
<dbReference type="STRING" id="10090.ENSMUSP00000056592"/>
<dbReference type="iPTMnet" id="Q9QYI7"/>
<dbReference type="PhosphoSitePlus" id="Q9QYI7"/>
<dbReference type="PaxDb" id="10090-ENSMUSP00000056592"/>
<dbReference type="ProteomicsDB" id="279458"/>
<dbReference type="Antibodypedia" id="33195">
    <property type="antibodies" value="104 antibodies from 18 providers"/>
</dbReference>
<dbReference type="DNASU" id="56691"/>
<dbReference type="Ensembl" id="ENSMUST00000061866.6">
    <property type="protein sequence ID" value="ENSMUSP00000056592.5"/>
    <property type="gene ID" value="ENSMUSG00000048206.7"/>
</dbReference>
<dbReference type="GeneID" id="56691"/>
<dbReference type="KEGG" id="mmu:56691"/>
<dbReference type="UCSC" id="uc009cve.1">
    <property type="organism name" value="mouse"/>
</dbReference>
<dbReference type="AGR" id="MGI:1922801"/>
<dbReference type="CTD" id="165721"/>
<dbReference type="MGI" id="MGI:1922801">
    <property type="gene designation" value="Dnajb8"/>
</dbReference>
<dbReference type="VEuPathDB" id="HostDB:ENSMUSG00000048206"/>
<dbReference type="eggNOG" id="KOG0714">
    <property type="taxonomic scope" value="Eukaryota"/>
</dbReference>
<dbReference type="GeneTree" id="ENSGT00940000162567"/>
<dbReference type="HOGENOM" id="CLU_017633_12_0_1"/>
<dbReference type="InParanoid" id="Q9QYI7"/>
<dbReference type="OMA" id="FDFWDNP"/>
<dbReference type="OrthoDB" id="10250354at2759"/>
<dbReference type="PhylomeDB" id="Q9QYI7"/>
<dbReference type="TreeFam" id="TF105142"/>
<dbReference type="BioGRID-ORCS" id="56691">
    <property type="hits" value="3 hits in 80 CRISPR screens"/>
</dbReference>
<dbReference type="PRO" id="PR:Q9QYI7"/>
<dbReference type="Proteomes" id="UP000000589">
    <property type="component" value="Chromosome 6"/>
</dbReference>
<dbReference type="RNAct" id="Q9QYI7">
    <property type="molecule type" value="protein"/>
</dbReference>
<dbReference type="Bgee" id="ENSMUSG00000048206">
    <property type="expression patterns" value="Expressed in seminiferous tubule of testis and 9 other cell types or tissues"/>
</dbReference>
<dbReference type="ExpressionAtlas" id="Q9QYI7">
    <property type="expression patterns" value="baseline and differential"/>
</dbReference>
<dbReference type="GO" id="GO:0005829">
    <property type="term" value="C:cytosol"/>
    <property type="evidence" value="ECO:0007669"/>
    <property type="project" value="Ensembl"/>
</dbReference>
<dbReference type="GO" id="GO:0005634">
    <property type="term" value="C:nucleus"/>
    <property type="evidence" value="ECO:0007669"/>
    <property type="project" value="Ensembl"/>
</dbReference>
<dbReference type="GO" id="GO:0030544">
    <property type="term" value="F:Hsp70 protein binding"/>
    <property type="evidence" value="ECO:0007669"/>
    <property type="project" value="InterPro"/>
</dbReference>
<dbReference type="GO" id="GO:0044183">
    <property type="term" value="F:protein folding chaperone"/>
    <property type="evidence" value="ECO:0000266"/>
    <property type="project" value="MGI"/>
</dbReference>
<dbReference type="GO" id="GO:0051082">
    <property type="term" value="F:unfolded protein binding"/>
    <property type="evidence" value="ECO:0007669"/>
    <property type="project" value="Ensembl"/>
</dbReference>
<dbReference type="GO" id="GO:0061077">
    <property type="term" value="P:chaperone-mediated protein folding"/>
    <property type="evidence" value="ECO:0000266"/>
    <property type="project" value="MGI"/>
</dbReference>
<dbReference type="GO" id="GO:0090084">
    <property type="term" value="P:negative regulation of inclusion body assembly"/>
    <property type="evidence" value="ECO:0007669"/>
    <property type="project" value="Ensembl"/>
</dbReference>
<dbReference type="CDD" id="cd06257">
    <property type="entry name" value="DnaJ"/>
    <property type="match status" value="1"/>
</dbReference>
<dbReference type="FunFam" id="1.10.287.110:FF:000021">
    <property type="entry name" value="DnaJ (Hsp40) homolog, subfamily B, member 2"/>
    <property type="match status" value="1"/>
</dbReference>
<dbReference type="Gene3D" id="1.10.287.110">
    <property type="entry name" value="DnaJ domain"/>
    <property type="match status" value="1"/>
</dbReference>
<dbReference type="InterPro" id="IPR001623">
    <property type="entry name" value="DnaJ_domain"/>
</dbReference>
<dbReference type="InterPro" id="IPR018253">
    <property type="entry name" value="DnaJ_domain_CS"/>
</dbReference>
<dbReference type="InterPro" id="IPR043183">
    <property type="entry name" value="DNJB2/6-like"/>
</dbReference>
<dbReference type="InterPro" id="IPR036869">
    <property type="entry name" value="J_dom_sf"/>
</dbReference>
<dbReference type="PANTHER" id="PTHR45168:SF2">
    <property type="entry name" value="DNAJ HEAT SHOCK PROTEIN FAMILY (HSP40) MEMBER B8"/>
    <property type="match status" value="1"/>
</dbReference>
<dbReference type="PANTHER" id="PTHR45168">
    <property type="entry name" value="DNAJ HOMOLOG SUBFAMILY B MEMBER 2"/>
    <property type="match status" value="1"/>
</dbReference>
<dbReference type="Pfam" id="PF00226">
    <property type="entry name" value="DnaJ"/>
    <property type="match status" value="1"/>
</dbReference>
<dbReference type="PRINTS" id="PR00625">
    <property type="entry name" value="JDOMAIN"/>
</dbReference>
<dbReference type="SMART" id="SM00271">
    <property type="entry name" value="DnaJ"/>
    <property type="match status" value="1"/>
</dbReference>
<dbReference type="SUPFAM" id="SSF46565">
    <property type="entry name" value="Chaperone J-domain"/>
    <property type="match status" value="1"/>
</dbReference>
<dbReference type="PROSITE" id="PS00636">
    <property type="entry name" value="DNAJ_1"/>
    <property type="match status" value="1"/>
</dbReference>
<dbReference type="PROSITE" id="PS50076">
    <property type="entry name" value="DNAJ_2"/>
    <property type="match status" value="1"/>
</dbReference>
<name>DNJB8_MOUSE</name>
<protein>
    <recommendedName>
        <fullName>DnaJ homolog subfamily B member 8</fullName>
    </recommendedName>
    <alternativeName>
        <fullName>mDj6</fullName>
    </alternativeName>
</protein>
<keyword id="KW-0143">Chaperone</keyword>
<keyword id="KW-1185">Reference proteome</keyword>
<reference key="1">
    <citation type="journal article" date="2000" name="Cell Stress Chaperones">
        <title>Mammalian HSP40/DNAJ homologs: cloning of novel cDNAs and a proposal for their classification and nomenclature.</title>
        <authorList>
            <person name="Ohtsuka K."/>
            <person name="Hata M."/>
        </authorList>
    </citation>
    <scope>NUCLEOTIDE SEQUENCE [MRNA]</scope>
    <source>
        <strain>CD-1</strain>
    </source>
</reference>
<reference key="2">
    <citation type="journal article" date="2005" name="Science">
        <title>The transcriptional landscape of the mammalian genome.</title>
        <authorList>
            <person name="Carninci P."/>
            <person name="Kasukawa T."/>
            <person name="Katayama S."/>
            <person name="Gough J."/>
            <person name="Frith M.C."/>
            <person name="Maeda N."/>
            <person name="Oyama R."/>
            <person name="Ravasi T."/>
            <person name="Lenhard B."/>
            <person name="Wells C."/>
            <person name="Kodzius R."/>
            <person name="Shimokawa K."/>
            <person name="Bajic V.B."/>
            <person name="Brenner S.E."/>
            <person name="Batalov S."/>
            <person name="Forrest A.R."/>
            <person name="Zavolan M."/>
            <person name="Davis M.J."/>
            <person name="Wilming L.G."/>
            <person name="Aidinis V."/>
            <person name="Allen J.E."/>
            <person name="Ambesi-Impiombato A."/>
            <person name="Apweiler R."/>
            <person name="Aturaliya R.N."/>
            <person name="Bailey T.L."/>
            <person name="Bansal M."/>
            <person name="Baxter L."/>
            <person name="Beisel K.W."/>
            <person name="Bersano T."/>
            <person name="Bono H."/>
            <person name="Chalk A.M."/>
            <person name="Chiu K.P."/>
            <person name="Choudhary V."/>
            <person name="Christoffels A."/>
            <person name="Clutterbuck D.R."/>
            <person name="Crowe M.L."/>
            <person name="Dalla E."/>
            <person name="Dalrymple B.P."/>
            <person name="de Bono B."/>
            <person name="Della Gatta G."/>
            <person name="di Bernardo D."/>
            <person name="Down T."/>
            <person name="Engstrom P."/>
            <person name="Fagiolini M."/>
            <person name="Faulkner G."/>
            <person name="Fletcher C.F."/>
            <person name="Fukushima T."/>
            <person name="Furuno M."/>
            <person name="Futaki S."/>
            <person name="Gariboldi M."/>
            <person name="Georgii-Hemming P."/>
            <person name="Gingeras T.R."/>
            <person name="Gojobori T."/>
            <person name="Green R.E."/>
            <person name="Gustincich S."/>
            <person name="Harbers M."/>
            <person name="Hayashi Y."/>
            <person name="Hensch T.K."/>
            <person name="Hirokawa N."/>
            <person name="Hill D."/>
            <person name="Huminiecki L."/>
            <person name="Iacono M."/>
            <person name="Ikeo K."/>
            <person name="Iwama A."/>
            <person name="Ishikawa T."/>
            <person name="Jakt M."/>
            <person name="Kanapin A."/>
            <person name="Katoh M."/>
            <person name="Kawasawa Y."/>
            <person name="Kelso J."/>
            <person name="Kitamura H."/>
            <person name="Kitano H."/>
            <person name="Kollias G."/>
            <person name="Krishnan S.P."/>
            <person name="Kruger A."/>
            <person name="Kummerfeld S.K."/>
            <person name="Kurochkin I.V."/>
            <person name="Lareau L.F."/>
            <person name="Lazarevic D."/>
            <person name="Lipovich L."/>
            <person name="Liu J."/>
            <person name="Liuni S."/>
            <person name="McWilliam S."/>
            <person name="Madan Babu M."/>
            <person name="Madera M."/>
            <person name="Marchionni L."/>
            <person name="Matsuda H."/>
            <person name="Matsuzawa S."/>
            <person name="Miki H."/>
            <person name="Mignone F."/>
            <person name="Miyake S."/>
            <person name="Morris K."/>
            <person name="Mottagui-Tabar S."/>
            <person name="Mulder N."/>
            <person name="Nakano N."/>
            <person name="Nakauchi H."/>
            <person name="Ng P."/>
            <person name="Nilsson R."/>
            <person name="Nishiguchi S."/>
            <person name="Nishikawa S."/>
            <person name="Nori F."/>
            <person name="Ohara O."/>
            <person name="Okazaki Y."/>
            <person name="Orlando V."/>
            <person name="Pang K.C."/>
            <person name="Pavan W.J."/>
            <person name="Pavesi G."/>
            <person name="Pesole G."/>
            <person name="Petrovsky N."/>
            <person name="Piazza S."/>
            <person name="Reed J."/>
            <person name="Reid J.F."/>
            <person name="Ring B.Z."/>
            <person name="Ringwald M."/>
            <person name="Rost B."/>
            <person name="Ruan Y."/>
            <person name="Salzberg S.L."/>
            <person name="Sandelin A."/>
            <person name="Schneider C."/>
            <person name="Schoenbach C."/>
            <person name="Sekiguchi K."/>
            <person name="Semple C.A."/>
            <person name="Seno S."/>
            <person name="Sessa L."/>
            <person name="Sheng Y."/>
            <person name="Shibata Y."/>
            <person name="Shimada H."/>
            <person name="Shimada K."/>
            <person name="Silva D."/>
            <person name="Sinclair B."/>
            <person name="Sperling S."/>
            <person name="Stupka E."/>
            <person name="Sugiura K."/>
            <person name="Sultana R."/>
            <person name="Takenaka Y."/>
            <person name="Taki K."/>
            <person name="Tammoja K."/>
            <person name="Tan S.L."/>
            <person name="Tang S."/>
            <person name="Taylor M.S."/>
            <person name="Tegner J."/>
            <person name="Teichmann S.A."/>
            <person name="Ueda H.R."/>
            <person name="van Nimwegen E."/>
            <person name="Verardo R."/>
            <person name="Wei C.L."/>
            <person name="Yagi K."/>
            <person name="Yamanishi H."/>
            <person name="Zabarovsky E."/>
            <person name="Zhu S."/>
            <person name="Zimmer A."/>
            <person name="Hide W."/>
            <person name="Bult C."/>
            <person name="Grimmond S.M."/>
            <person name="Teasdale R.D."/>
            <person name="Liu E.T."/>
            <person name="Brusic V."/>
            <person name="Quackenbush J."/>
            <person name="Wahlestedt C."/>
            <person name="Mattick J.S."/>
            <person name="Hume D.A."/>
            <person name="Kai C."/>
            <person name="Sasaki D."/>
            <person name="Tomaru Y."/>
            <person name="Fukuda S."/>
            <person name="Kanamori-Katayama M."/>
            <person name="Suzuki M."/>
            <person name="Aoki J."/>
            <person name="Arakawa T."/>
            <person name="Iida J."/>
            <person name="Imamura K."/>
            <person name="Itoh M."/>
            <person name="Kato T."/>
            <person name="Kawaji H."/>
            <person name="Kawagashira N."/>
            <person name="Kawashima T."/>
            <person name="Kojima M."/>
            <person name="Kondo S."/>
            <person name="Konno H."/>
            <person name="Nakano K."/>
            <person name="Ninomiya N."/>
            <person name="Nishio T."/>
            <person name="Okada M."/>
            <person name="Plessy C."/>
            <person name="Shibata K."/>
            <person name="Shiraki T."/>
            <person name="Suzuki S."/>
            <person name="Tagami M."/>
            <person name="Waki K."/>
            <person name="Watahiki A."/>
            <person name="Okamura-Oho Y."/>
            <person name="Suzuki H."/>
            <person name="Kawai J."/>
            <person name="Hayashizaki Y."/>
        </authorList>
    </citation>
    <scope>NUCLEOTIDE SEQUENCE [LARGE SCALE MRNA]</scope>
    <source>
        <strain>C57BL/6J</strain>
        <tissue>Testis</tissue>
    </source>
</reference>
<reference key="3">
    <citation type="journal article" date="2004" name="Genome Res.">
        <title>The status, quality, and expansion of the NIH full-length cDNA project: the Mammalian Gene Collection (MGC).</title>
        <authorList>
            <consortium name="The MGC Project Team"/>
        </authorList>
    </citation>
    <scope>NUCLEOTIDE SEQUENCE [LARGE SCALE MRNA]</scope>
    <source>
        <tissue>Testis</tissue>
    </source>
</reference>
<feature type="chain" id="PRO_0000071030" description="DnaJ homolog subfamily B member 8">
    <location>
        <begin position="1"/>
        <end position="227"/>
    </location>
</feature>
<feature type="domain" description="J" evidence="2">
    <location>
        <begin position="3"/>
        <end position="69"/>
    </location>
</feature>
<proteinExistence type="evidence at transcript level"/>
<evidence type="ECO:0000250" key="1"/>
<evidence type="ECO:0000255" key="2">
    <source>
        <dbReference type="PROSITE-ProRule" id="PRU00286"/>
    </source>
</evidence>
<sequence>MANYYEVLGVQSSASPEDIKKAYRKLALRWHPDKNPDNKEEAEKKFKQVSEAYEVLSDSKKRSVYDRAGCDRWRAGGGANVPHSSPFGAGYPFRNPEDIFREFFGGLDPFSFEFWDTPFSGRGRPHGLHRVFPSGFGEFPAFMEALSSFNTLGHGGGSRSTFSSASFGGSGSSGFKSVMSSTEMVNGRKVTTKRIIENGQERVEVEEDGQLRSVTVNGKEKLMRVDK</sequence>
<comment type="function">
    <text evidence="1">Efficient suppressor of aggregation and toxicity of disease-associated polyglutamine proteins.</text>
</comment>
<comment type="subunit">
    <text evidence="1">Interacts with histone deacetylases HDAC4, HDAC6, and SIRT2, HDAC activity is required for antiaggregation.</text>
</comment>
<comment type="domain">
    <text evidence="1">The antiaggregation activity resides in the serine-rich region and the C-terminus.</text>
</comment>
<accession>Q9QYI7</accession>
<gene>
    <name type="primary">Dnajb8</name>
</gene>